<keyword id="KW-0413">Isomerase</keyword>
<keyword id="KW-0819">tRNA processing</keyword>
<reference key="1">
    <citation type="journal article" date="2009" name="Science">
        <title>The dynamics and time scale of ongoing genomic erosion in symbiotic bacteria.</title>
        <authorList>
            <person name="Moran N.A."/>
            <person name="McLaughlin H.J."/>
            <person name="Sorek R."/>
        </authorList>
    </citation>
    <scope>NUCLEOTIDE SEQUENCE [LARGE SCALE GENOMIC DNA]</scope>
    <source>
        <strain>Tuc7</strain>
    </source>
</reference>
<organism>
    <name type="scientific">Buchnera aphidicola subsp. Acyrthosiphon pisum (strain Tuc7)</name>
    <dbReference type="NCBI Taxonomy" id="561501"/>
    <lineage>
        <taxon>Bacteria</taxon>
        <taxon>Pseudomonadati</taxon>
        <taxon>Pseudomonadota</taxon>
        <taxon>Gammaproteobacteria</taxon>
        <taxon>Enterobacterales</taxon>
        <taxon>Erwiniaceae</taxon>
        <taxon>Buchnera</taxon>
    </lineage>
</organism>
<accession>B8D7A3</accession>
<evidence type="ECO:0000255" key="1">
    <source>
        <dbReference type="HAMAP-Rule" id="MF_00171"/>
    </source>
</evidence>
<gene>
    <name evidence="1" type="primary">truA</name>
    <name type="ordered locus">BUAPTUC7_198</name>
</gene>
<comment type="function">
    <text evidence="1">Formation of pseudouridine at positions 38, 39 and 40 in the anticodon stem and loop of transfer RNAs.</text>
</comment>
<comment type="catalytic activity">
    <reaction evidence="1">
        <text>uridine(38/39/40) in tRNA = pseudouridine(38/39/40) in tRNA</text>
        <dbReference type="Rhea" id="RHEA:22376"/>
        <dbReference type="Rhea" id="RHEA-COMP:10085"/>
        <dbReference type="Rhea" id="RHEA-COMP:10087"/>
        <dbReference type="ChEBI" id="CHEBI:65314"/>
        <dbReference type="ChEBI" id="CHEBI:65315"/>
        <dbReference type="EC" id="5.4.99.12"/>
    </reaction>
</comment>
<comment type="subunit">
    <text evidence="1">Homodimer.</text>
</comment>
<comment type="similarity">
    <text evidence="1">Belongs to the tRNA pseudouridine synthase TruA family.</text>
</comment>
<proteinExistence type="inferred from homology"/>
<protein>
    <recommendedName>
        <fullName evidence="1">tRNA pseudouridine synthase A</fullName>
        <ecNumber evidence="1">5.4.99.12</ecNumber>
    </recommendedName>
    <alternativeName>
        <fullName evidence="1">tRNA pseudouridine(38-40) synthase</fullName>
    </alternativeName>
    <alternativeName>
        <fullName evidence="1">tRNA pseudouridylate synthase I</fullName>
    </alternativeName>
    <alternativeName>
        <fullName evidence="1">tRNA-uridine isomerase I</fullName>
    </alternativeName>
</protein>
<name>TRUA_BUCAT</name>
<dbReference type="EC" id="5.4.99.12" evidence="1"/>
<dbReference type="EMBL" id="CP001158">
    <property type="protein sequence ID" value="ACL30018.1"/>
    <property type="molecule type" value="Genomic_DNA"/>
</dbReference>
<dbReference type="RefSeq" id="WP_009874156.1">
    <property type="nucleotide sequence ID" value="NC_011834.1"/>
</dbReference>
<dbReference type="SMR" id="B8D7A3"/>
<dbReference type="KEGG" id="bau:BUAPTUC7_198"/>
<dbReference type="HOGENOM" id="CLU_014673_0_2_6"/>
<dbReference type="GO" id="GO:0003723">
    <property type="term" value="F:RNA binding"/>
    <property type="evidence" value="ECO:0007669"/>
    <property type="project" value="InterPro"/>
</dbReference>
<dbReference type="GO" id="GO:0160147">
    <property type="term" value="F:tRNA pseudouridine(38-40) synthase activity"/>
    <property type="evidence" value="ECO:0007669"/>
    <property type="project" value="UniProtKB-EC"/>
</dbReference>
<dbReference type="GO" id="GO:0031119">
    <property type="term" value="P:tRNA pseudouridine synthesis"/>
    <property type="evidence" value="ECO:0007669"/>
    <property type="project" value="UniProtKB-UniRule"/>
</dbReference>
<dbReference type="CDD" id="cd02570">
    <property type="entry name" value="PseudoU_synth_EcTruA"/>
    <property type="match status" value="1"/>
</dbReference>
<dbReference type="FunFam" id="3.30.70.580:FF:000001">
    <property type="entry name" value="tRNA pseudouridine synthase A"/>
    <property type="match status" value="1"/>
</dbReference>
<dbReference type="Gene3D" id="3.30.70.660">
    <property type="entry name" value="Pseudouridine synthase I, catalytic domain, C-terminal subdomain"/>
    <property type="match status" value="1"/>
</dbReference>
<dbReference type="Gene3D" id="3.30.70.580">
    <property type="entry name" value="Pseudouridine synthase I, catalytic domain, N-terminal subdomain"/>
    <property type="match status" value="1"/>
</dbReference>
<dbReference type="HAMAP" id="MF_00171">
    <property type="entry name" value="TruA"/>
    <property type="match status" value="1"/>
</dbReference>
<dbReference type="InterPro" id="IPR020103">
    <property type="entry name" value="PsdUridine_synth_cat_dom_sf"/>
</dbReference>
<dbReference type="InterPro" id="IPR001406">
    <property type="entry name" value="PsdUridine_synth_TruA"/>
</dbReference>
<dbReference type="InterPro" id="IPR020097">
    <property type="entry name" value="PsdUridine_synth_TruA_a/b_dom"/>
</dbReference>
<dbReference type="InterPro" id="IPR020095">
    <property type="entry name" value="PsdUridine_synth_TruA_C"/>
</dbReference>
<dbReference type="InterPro" id="IPR020094">
    <property type="entry name" value="TruA/RsuA/RluB/E/F_N"/>
</dbReference>
<dbReference type="NCBIfam" id="TIGR00071">
    <property type="entry name" value="hisT_truA"/>
    <property type="match status" value="1"/>
</dbReference>
<dbReference type="PANTHER" id="PTHR11142">
    <property type="entry name" value="PSEUDOURIDYLATE SYNTHASE"/>
    <property type="match status" value="1"/>
</dbReference>
<dbReference type="PANTHER" id="PTHR11142:SF0">
    <property type="entry name" value="TRNA PSEUDOURIDINE SYNTHASE-LIKE 1"/>
    <property type="match status" value="1"/>
</dbReference>
<dbReference type="Pfam" id="PF01416">
    <property type="entry name" value="PseudoU_synth_1"/>
    <property type="match status" value="2"/>
</dbReference>
<dbReference type="PIRSF" id="PIRSF001430">
    <property type="entry name" value="tRNA_psdUrid_synth"/>
    <property type="match status" value="1"/>
</dbReference>
<dbReference type="SUPFAM" id="SSF55120">
    <property type="entry name" value="Pseudouridine synthase"/>
    <property type="match status" value="1"/>
</dbReference>
<sequence>MVAKNVKTFALGVEYDGSYYHGWQRQKIVPSIQEEIEKALSIIANHKIDVVCAGRTDAGVHSIGQVIHFKTTANRKKSSWSIGVNSYLSENISVVWVKEVTENFHARYSAITRSYRYIIYNYSLRSAIFQTKLNHIYRKLNVDKMHFEAQFLLGEHDFTSFRALGCQSHSPWRNITKLNVFRFHNWVVVDITANSFLHHMVRNIVGSLIEVGISKKKEYWIKDLLEKKDRSHAGATAPAKGLYLVYVEYPLHFNLPRSAYTSIFFK</sequence>
<feature type="chain" id="PRO_1000194536" description="tRNA pseudouridine synthase A">
    <location>
        <begin position="1"/>
        <end position="266"/>
    </location>
</feature>
<feature type="active site" description="Nucleophile" evidence="1">
    <location>
        <position position="57"/>
    </location>
</feature>
<feature type="binding site" evidence="1">
    <location>
        <position position="115"/>
    </location>
    <ligand>
        <name>substrate</name>
    </ligand>
</feature>